<proteinExistence type="evidence at protein level"/>
<evidence type="ECO:0000255" key="1"/>
<evidence type="ECO:0000269" key="2">
    <source>
    </source>
</evidence>
<evidence type="ECO:0000303" key="3">
    <source>
    </source>
</evidence>
<evidence type="ECO:0000305" key="4"/>
<organism>
    <name type="scientific">Pyricularia oryzae (strain 70-15 / ATCC MYA-4617 / FGSC 8958)</name>
    <name type="common">Rice blast fungus</name>
    <name type="synonym">Magnaporthe oryzae</name>
    <dbReference type="NCBI Taxonomy" id="242507"/>
    <lineage>
        <taxon>Eukaryota</taxon>
        <taxon>Fungi</taxon>
        <taxon>Dikarya</taxon>
        <taxon>Ascomycota</taxon>
        <taxon>Pezizomycotina</taxon>
        <taxon>Sordariomycetes</taxon>
        <taxon>Sordariomycetidae</taxon>
        <taxon>Magnaporthales</taxon>
        <taxon>Pyriculariaceae</taxon>
        <taxon>Pyricularia</taxon>
    </lineage>
</organism>
<feature type="signal peptide" evidence="1">
    <location>
        <begin position="1"/>
        <end position="16"/>
    </location>
</feature>
<feature type="chain" id="PRO_5010834286" description="Secreted virulence factor MC69">
    <location>
        <begin position="17"/>
        <end position="54"/>
    </location>
</feature>
<feature type="disulfide bond" evidence="2">
    <location>
        <begin position="36"/>
        <end position="46"/>
    </location>
</feature>
<feature type="mutagenesis site" description="Significantly reduces appressorial penetration rate and blast symptoms on barley and rice." evidence="2">
    <original>C</original>
    <variation>A</variation>
    <location>
        <position position="36"/>
    </location>
</feature>
<feature type="mutagenesis site" description="Significantly reduces appressorial penetration rate and blast symptoms on barley and rice." evidence="2">
    <original>C</original>
    <variation>A</variation>
    <location>
        <position position="46"/>
    </location>
</feature>
<sequence length="54" mass="5666">MKAAFVLALCASLASAWVVITPITKEMVVDRSPDDCFFGVVTPQGCGPLRGPAK</sequence>
<gene>
    <name evidence="3" type="primary">MC69</name>
    <name type="ORF">MGCH7_ch7g606</name>
    <name type="ORF">MGG_02848</name>
</gene>
<dbReference type="EMBL" id="CM000230">
    <property type="protein sequence ID" value="EAQ71199.1"/>
    <property type="molecule type" value="Genomic_DNA"/>
</dbReference>
<dbReference type="EMBL" id="CM001237">
    <property type="protein sequence ID" value="EHA46146.1"/>
    <property type="molecule type" value="Genomic_DNA"/>
</dbReference>
<dbReference type="RefSeq" id="XP_003720889.1">
    <property type="nucleotide sequence ID" value="XM_003720841.1"/>
</dbReference>
<dbReference type="STRING" id="242507.G5EI17"/>
<dbReference type="EnsemblFungi" id="MGG_02848T0">
    <property type="protein sequence ID" value="MGG_02848T0"/>
    <property type="gene ID" value="MGG_02848"/>
</dbReference>
<dbReference type="GeneID" id="2682401"/>
<dbReference type="KEGG" id="mgr:MGG_02848"/>
<dbReference type="VEuPathDB" id="FungiDB:MGG_02848"/>
<dbReference type="eggNOG" id="ENOG502RPF6">
    <property type="taxonomic scope" value="Eukaryota"/>
</dbReference>
<dbReference type="HOGENOM" id="CLU_205482_0_0_1"/>
<dbReference type="InParanoid" id="G5EI17"/>
<dbReference type="OMA" id="QGCGPKR"/>
<dbReference type="OrthoDB" id="5144659at2759"/>
<dbReference type="PHI-base" id="PHI:3122"/>
<dbReference type="Proteomes" id="UP000009058">
    <property type="component" value="Chromosome 7"/>
</dbReference>
<dbReference type="GO" id="GO:0005576">
    <property type="term" value="C:extracellular region"/>
    <property type="evidence" value="ECO:0007669"/>
    <property type="project" value="UniProtKB-SubCell"/>
</dbReference>
<name>MC69_PYRO7</name>
<comment type="function">
    <text evidence="2">Secreted protein required for appressorial penetration of intact host epidermal cells and for pathogenicity.</text>
</comment>
<comment type="subcellular location">
    <subcellularLocation>
        <location evidence="2">Secreted</location>
    </subcellularLocation>
    <text evidence="2">Accumulates in an interfacial structure named the biotrophic interfacial complex (BIC) but is not translocated into rice cells.</text>
</comment>
<comment type="induction">
    <text evidence="2">Expressed in conidia an all stages of infection.</text>
</comment>
<comment type="disruption phenotype">
    <text evidence="2">Impairs pathogenicity (PubMed:22589729). Exhibits a defect in appressorium-mediated penetration in rice leaf sheath cells but neither in conidial germination nor appressorium formation (PubMed:22589729).</text>
</comment>
<comment type="similarity">
    <text evidence="4">Belongs to the MC69 virulence factor family.</text>
</comment>
<reference key="1">
    <citation type="journal article" date="2005" name="Nature">
        <title>The genome sequence of the rice blast fungus Magnaporthe grisea.</title>
        <authorList>
            <person name="Dean R.A."/>
            <person name="Talbot N.J."/>
            <person name="Ebbole D.J."/>
            <person name="Farman M.L."/>
            <person name="Mitchell T.K."/>
            <person name="Orbach M.J."/>
            <person name="Thon M.R."/>
            <person name="Kulkarni R."/>
            <person name="Xu J.-R."/>
            <person name="Pan H."/>
            <person name="Read N.D."/>
            <person name="Lee Y.-H."/>
            <person name="Carbone I."/>
            <person name="Brown D."/>
            <person name="Oh Y.Y."/>
            <person name="Donofrio N."/>
            <person name="Jeong J.S."/>
            <person name="Soanes D.M."/>
            <person name="Djonovic S."/>
            <person name="Kolomiets E."/>
            <person name="Rehmeyer C."/>
            <person name="Li W."/>
            <person name="Harding M."/>
            <person name="Kim S."/>
            <person name="Lebrun M.-H."/>
            <person name="Bohnert H."/>
            <person name="Coughlan S."/>
            <person name="Butler J."/>
            <person name="Calvo S.E."/>
            <person name="Ma L.-J."/>
            <person name="Nicol R."/>
            <person name="Purcell S."/>
            <person name="Nusbaum C."/>
            <person name="Galagan J.E."/>
            <person name="Birren B.W."/>
        </authorList>
    </citation>
    <scope>NUCLEOTIDE SEQUENCE [LARGE SCALE GENOMIC DNA]</scope>
    <source>
        <strain>70-15 / ATCC MYA-4617 / FGSC 8958</strain>
    </source>
</reference>
<reference key="2">
    <citation type="journal article" date="2012" name="PLoS Pathog.">
        <title>Large-scale gene disruption in Magnaporthe oryzae identifies MC69, a secreted protein required for infection by monocot and dicot fungal pathogens.</title>
        <authorList>
            <person name="Saitoh H."/>
            <person name="Fujisawa S."/>
            <person name="Mitsuoka C."/>
            <person name="Ito A."/>
            <person name="Hirabuchi A."/>
            <person name="Ikeda K."/>
            <person name="Irieda H."/>
            <person name="Yoshino K."/>
            <person name="Yoshida K."/>
            <person name="Matsumura H."/>
            <person name="Tosa Y."/>
            <person name="Win J."/>
            <person name="Kamoun S."/>
            <person name="Takano Y."/>
            <person name="Terauchi R."/>
        </authorList>
    </citation>
    <scope>FUNCTION</scope>
    <scope>INDUCTION</scope>
    <scope>DISRUPTION PHENOTYPE</scope>
    <scope>SUBCELLULAR LOCATION</scope>
    <scope>MUTAGENESIS OF CYS-36 AND CYS-46</scope>
    <scope>DISULFIDE BOND</scope>
</reference>
<accession>G5EI17</accession>
<keyword id="KW-1015">Disulfide bond</keyword>
<keyword id="KW-1185">Reference proteome</keyword>
<keyword id="KW-0964">Secreted</keyword>
<keyword id="KW-0732">Signal</keyword>
<keyword id="KW-0843">Virulence</keyword>
<protein>
    <recommendedName>
        <fullName evidence="3">Secreted virulence factor MC69</fullName>
    </recommendedName>
</protein>